<organism>
    <name type="scientific">Saccharomyces cerevisiae (strain AWRI1631)</name>
    <name type="common">Baker's yeast</name>
    <dbReference type="NCBI Taxonomy" id="545124"/>
    <lineage>
        <taxon>Eukaryota</taxon>
        <taxon>Fungi</taxon>
        <taxon>Dikarya</taxon>
        <taxon>Ascomycota</taxon>
        <taxon>Saccharomycotina</taxon>
        <taxon>Saccharomycetes</taxon>
        <taxon>Saccharomycetales</taxon>
        <taxon>Saccharomycetaceae</taxon>
        <taxon>Saccharomyces</taxon>
    </lineage>
</organism>
<feature type="chain" id="PRO_0000369306" description="Cytoplasmic tRNA 2-thiolation protein 2">
    <location>
        <begin position="1"/>
        <end position="493"/>
    </location>
</feature>
<feature type="modified residue" description="Phosphoserine" evidence="1">
    <location>
        <position position="489"/>
    </location>
</feature>
<gene>
    <name evidence="2" type="primary">NCS2</name>
    <name evidence="2" type="synonym">CTU2</name>
    <name evidence="2" type="synonym">TUC2</name>
    <name type="ORF">AWRI1631_142030</name>
</gene>
<name>CTU2_YEAS6</name>
<keyword id="KW-0963">Cytoplasm</keyword>
<keyword id="KW-0597">Phosphoprotein</keyword>
<keyword id="KW-0819">tRNA processing</keyword>
<comment type="function">
    <text evidence="2">Plays a central role in 2-thiolation of mcm(5)S(2)U at tRNA wobble positions of tRNA(Lys), tRNA(Glu) and tRNA(Gln). May act by forming a heterodimer with NCS6 that ligates sulfur from thiocarboxylated URM1 onto the uridine of tRNAs at wobble position. Prior mcm(5) tRNA modification by the elongator complex is required for 2-thiolation. May also be involved in protein urmylation.</text>
</comment>
<comment type="pathway">
    <text evidence="2">tRNA modification; 5-methoxycarbonylmethyl-2-thiouridine-tRNA biosynthesis.</text>
</comment>
<comment type="subunit">
    <text evidence="2">Interacts with NCS6 and URM1. May act by forming a heterodimer with NCS6.</text>
</comment>
<comment type="subcellular location">
    <subcellularLocation>
        <location evidence="2">Cytoplasm</location>
    </subcellularLocation>
</comment>
<comment type="similarity">
    <text evidence="2">Belongs to the CTU2/NCS2 family.</text>
</comment>
<evidence type="ECO:0000250" key="1">
    <source>
        <dbReference type="UniProtKB" id="P53923"/>
    </source>
</evidence>
<evidence type="ECO:0000255" key="2">
    <source>
        <dbReference type="HAMAP-Rule" id="MF_03054"/>
    </source>
</evidence>
<proteinExistence type="inferred from homology"/>
<dbReference type="EMBL" id="ABSV01001998">
    <property type="protein sequence ID" value="EDZ69720.1"/>
    <property type="molecule type" value="Genomic_DNA"/>
</dbReference>
<dbReference type="UniPathway" id="UPA00988"/>
<dbReference type="Proteomes" id="UP000008988">
    <property type="component" value="Unassembled WGS sequence"/>
</dbReference>
<dbReference type="GO" id="GO:0005829">
    <property type="term" value="C:cytosol"/>
    <property type="evidence" value="ECO:0000250"/>
    <property type="project" value="UniProtKB"/>
</dbReference>
<dbReference type="GO" id="GO:0016779">
    <property type="term" value="F:nucleotidyltransferase activity"/>
    <property type="evidence" value="ECO:0007669"/>
    <property type="project" value="UniProtKB-UniRule"/>
</dbReference>
<dbReference type="GO" id="GO:0016783">
    <property type="term" value="F:sulfurtransferase activity"/>
    <property type="evidence" value="ECO:0007669"/>
    <property type="project" value="TreeGrafter"/>
</dbReference>
<dbReference type="GO" id="GO:0000049">
    <property type="term" value="F:tRNA binding"/>
    <property type="evidence" value="ECO:0007669"/>
    <property type="project" value="InterPro"/>
</dbReference>
<dbReference type="GO" id="GO:0032447">
    <property type="term" value="P:protein urmylation"/>
    <property type="evidence" value="ECO:0007669"/>
    <property type="project" value="UniProtKB-UniRule"/>
</dbReference>
<dbReference type="GO" id="GO:0034227">
    <property type="term" value="P:tRNA thio-modification"/>
    <property type="evidence" value="ECO:0000250"/>
    <property type="project" value="UniProtKB"/>
</dbReference>
<dbReference type="GO" id="GO:0002143">
    <property type="term" value="P:tRNA wobble position uridine thiolation"/>
    <property type="evidence" value="ECO:0007669"/>
    <property type="project" value="TreeGrafter"/>
</dbReference>
<dbReference type="GO" id="GO:0002098">
    <property type="term" value="P:tRNA wobble uridine modification"/>
    <property type="evidence" value="ECO:0000250"/>
    <property type="project" value="UniProtKB"/>
</dbReference>
<dbReference type="Gene3D" id="3.40.50.620">
    <property type="entry name" value="HUPs"/>
    <property type="match status" value="1"/>
</dbReference>
<dbReference type="HAMAP" id="MF_03054">
    <property type="entry name" value="CTU2"/>
    <property type="match status" value="1"/>
</dbReference>
<dbReference type="InterPro" id="IPR019407">
    <property type="entry name" value="CTU2"/>
</dbReference>
<dbReference type="InterPro" id="IPR014729">
    <property type="entry name" value="Rossmann-like_a/b/a_fold"/>
</dbReference>
<dbReference type="PANTHER" id="PTHR20882">
    <property type="entry name" value="CYTOPLASMIC TRNA 2-THIOLATION PROTEIN 2"/>
    <property type="match status" value="1"/>
</dbReference>
<dbReference type="PANTHER" id="PTHR20882:SF14">
    <property type="entry name" value="CYTOPLASMIC TRNA 2-THIOLATION PROTEIN 2"/>
    <property type="match status" value="1"/>
</dbReference>
<dbReference type="Pfam" id="PF10288">
    <property type="entry name" value="CTU2"/>
    <property type="match status" value="1"/>
</dbReference>
<reference key="1">
    <citation type="journal article" date="2008" name="FEMS Yeast Res.">
        <title>Comparative genome analysis of a Saccharomyces cerevisiae wine strain.</title>
        <authorList>
            <person name="Borneman A.R."/>
            <person name="Forgan A.H."/>
            <person name="Pretorius I.S."/>
            <person name="Chambers P.J."/>
        </authorList>
    </citation>
    <scope>NUCLEOTIDE SEQUENCE [LARGE SCALE GENOMIC DNA]</scope>
    <source>
        <strain>AWRI1631</strain>
    </source>
</reference>
<accession>B5VQS7</accession>
<sequence length="493" mass="56408">MECQRCPASARNPATVESRKEKFCDECFIKFVSTKQRKQMMKDEYFRNLFKVIYPFEKEGSVSKILLPLSLSDSGSLVMLDIVHDLLLEQTKQHNNRTGFTVDVLTVFTEENVSVIKERMESLINEKMSQLNKISNIFNVHFIDVNEFFNNASEVSTFIIDNENFEIFSKSKSVDDSNILTLKEILGKYCLNNSSRSDLISIIKTQLIKHFAYENGYNAIMWGHSMTKLSEVIISLVVKGKGSQIATFLDSESFDTLNNKPCKYKNLYPMKDLLSVEIESFLQIRNLAQFLINVEETNVKPNCLIARKSLPSLGQQKLVKNMTINEITNKYFQDIQNDYSNIISTVSRTADKLTQPKSSMAKPSQCQICQSKIYTNPSNWLNRITVTSPYPVETTEEKYLFKQWQDSKLGQSHTHYVELLNEIKQGASNSLDVEDGDVKLCYGCLILLNTSIKDKNLVWPKVDTMDITANATNNNKELSQILDQFEINSDGEE</sequence>
<protein>
    <recommendedName>
        <fullName evidence="2">Cytoplasmic tRNA 2-thiolation protein 2</fullName>
    </recommendedName>
    <alternativeName>
        <fullName evidence="2">Needs CLA4 to survive protein 2</fullName>
    </alternativeName>
    <alternativeName>
        <fullName evidence="2">Thiolation of uridine in cytoplasmic tRNA protein 2</fullName>
    </alternativeName>
</protein>